<gene>
    <name evidence="1" type="primary">ruvB</name>
    <name type="ordered locus">TTE1180</name>
</gene>
<proteinExistence type="inferred from homology"/>
<accession>Q8RAN2</accession>
<keyword id="KW-0067">ATP-binding</keyword>
<keyword id="KW-0963">Cytoplasm</keyword>
<keyword id="KW-0227">DNA damage</keyword>
<keyword id="KW-0233">DNA recombination</keyword>
<keyword id="KW-0234">DNA repair</keyword>
<keyword id="KW-0238">DNA-binding</keyword>
<keyword id="KW-0378">Hydrolase</keyword>
<keyword id="KW-0547">Nucleotide-binding</keyword>
<keyword id="KW-1185">Reference proteome</keyword>
<reference key="1">
    <citation type="journal article" date="2002" name="Genome Res.">
        <title>A complete sequence of the T. tengcongensis genome.</title>
        <authorList>
            <person name="Bao Q."/>
            <person name="Tian Y."/>
            <person name="Li W."/>
            <person name="Xu Z."/>
            <person name="Xuan Z."/>
            <person name="Hu S."/>
            <person name="Dong W."/>
            <person name="Yang J."/>
            <person name="Chen Y."/>
            <person name="Xue Y."/>
            <person name="Xu Y."/>
            <person name="Lai X."/>
            <person name="Huang L."/>
            <person name="Dong X."/>
            <person name="Ma Y."/>
            <person name="Ling L."/>
            <person name="Tan H."/>
            <person name="Chen R."/>
            <person name="Wang J."/>
            <person name="Yu J."/>
            <person name="Yang H."/>
        </authorList>
    </citation>
    <scope>NUCLEOTIDE SEQUENCE [LARGE SCALE GENOMIC DNA]</scope>
    <source>
        <strain>DSM 15242 / JCM 11007 / NBRC 100824 / MB4</strain>
    </source>
</reference>
<evidence type="ECO:0000255" key="1">
    <source>
        <dbReference type="HAMAP-Rule" id="MF_00016"/>
    </source>
</evidence>
<comment type="function">
    <text evidence="1">The RuvA-RuvB-RuvC complex processes Holliday junction (HJ) DNA during genetic recombination and DNA repair, while the RuvA-RuvB complex plays an important role in the rescue of blocked DNA replication forks via replication fork reversal (RFR). RuvA specifically binds to HJ cruciform DNA, conferring on it an open structure. The RuvB hexamer acts as an ATP-dependent pump, pulling dsDNA into and through the RuvAB complex. RuvB forms 2 homohexamers on either side of HJ DNA bound by 1 or 2 RuvA tetramers; 4 subunits per hexamer contact DNA at a time. Coordinated motions by a converter formed by DNA-disengaged RuvB subunits stimulates ATP hydrolysis and nucleotide exchange. Immobilization of the converter enables RuvB to convert the ATP-contained energy into a lever motion, pulling 2 nucleotides of DNA out of the RuvA tetramer per ATP hydrolyzed, thus driving DNA branch migration. The RuvB motors rotate together with the DNA substrate, which together with the progressing nucleotide cycle form the mechanistic basis for DNA recombination by continuous HJ branch migration. Branch migration allows RuvC to scan DNA until it finds its consensus sequence, where it cleaves and resolves cruciform DNA.</text>
</comment>
<comment type="catalytic activity">
    <reaction evidence="1">
        <text>ATP + H2O = ADP + phosphate + H(+)</text>
        <dbReference type="Rhea" id="RHEA:13065"/>
        <dbReference type="ChEBI" id="CHEBI:15377"/>
        <dbReference type="ChEBI" id="CHEBI:15378"/>
        <dbReference type="ChEBI" id="CHEBI:30616"/>
        <dbReference type="ChEBI" id="CHEBI:43474"/>
        <dbReference type="ChEBI" id="CHEBI:456216"/>
    </reaction>
</comment>
<comment type="subunit">
    <text evidence="1">Homohexamer. Forms an RuvA(8)-RuvB(12)-Holliday junction (HJ) complex. HJ DNA is sandwiched between 2 RuvA tetramers; dsDNA enters through RuvA and exits via RuvB. An RuvB hexamer assembles on each DNA strand where it exits the tetramer. Each RuvB hexamer is contacted by two RuvA subunits (via domain III) on 2 adjacent RuvB subunits; this complex drives branch migration. In the full resolvosome a probable DNA-RuvA(4)-RuvB(12)-RuvC(2) complex forms which resolves the HJ.</text>
</comment>
<comment type="subcellular location">
    <subcellularLocation>
        <location evidence="1">Cytoplasm</location>
    </subcellularLocation>
</comment>
<comment type="domain">
    <text evidence="1">Has 3 domains, the large (RuvB-L) and small ATPase (RuvB-S) domains and the C-terminal head (RuvB-H) domain. The head domain binds DNA, while the ATPase domains jointly bind ATP, ADP or are empty depending on the state of the subunit in the translocation cycle. During a single DNA translocation step the structure of each domain remains the same, but their relative positions change.</text>
</comment>
<comment type="similarity">
    <text evidence="1">Belongs to the RuvB family.</text>
</comment>
<sequence length="338" mass="38073">MEERILTQNFTQEDATEYSLRPRWLSEYIGQEKIKQELKIYIEAAKKRGEPLDHVLLYGPPGLGKTTLATVISNEMGVGIKITSGPAIERSGDLAAILTNLQENDILFIDEIHRLNRSVEEILYPAMEDFELDIVIGKGPSARSIRLSLPKFTLIGATTRAALMTSPLRSRFGVINRLDYYSVEELKEIIKRSANILNIGIDEDAAFEIARRSRGTPRIANRLLKRVRDFAEVKGNGYIDYNTANIALNMLGVDEMGLEEIDRKILIAIIEKFGGGPVGIDAIAASVGEDGDTIEDMYEPYLMQIGFLNRTPRGRVVTKLAYQYLKYPYVEQRRIEDV</sequence>
<name>RUVB_CALS4</name>
<protein>
    <recommendedName>
        <fullName evidence="1">Holliday junction branch migration complex subunit RuvB</fullName>
        <ecNumber evidence="1">3.6.4.-</ecNumber>
    </recommendedName>
</protein>
<organism>
    <name type="scientific">Caldanaerobacter subterraneus subsp. tengcongensis (strain DSM 15242 / JCM 11007 / NBRC 100824 / MB4)</name>
    <name type="common">Thermoanaerobacter tengcongensis</name>
    <dbReference type="NCBI Taxonomy" id="273068"/>
    <lineage>
        <taxon>Bacteria</taxon>
        <taxon>Bacillati</taxon>
        <taxon>Bacillota</taxon>
        <taxon>Clostridia</taxon>
        <taxon>Thermoanaerobacterales</taxon>
        <taxon>Thermoanaerobacteraceae</taxon>
        <taxon>Caldanaerobacter</taxon>
    </lineage>
</organism>
<feature type="chain" id="PRO_0000165621" description="Holliday junction branch migration complex subunit RuvB">
    <location>
        <begin position="1"/>
        <end position="338"/>
    </location>
</feature>
<feature type="region of interest" description="Large ATPase domain (RuvB-L)" evidence="1">
    <location>
        <begin position="1"/>
        <end position="181"/>
    </location>
</feature>
<feature type="region of interest" description="Small ATPAse domain (RuvB-S)" evidence="1">
    <location>
        <begin position="182"/>
        <end position="252"/>
    </location>
</feature>
<feature type="region of interest" description="Head domain (RuvB-H)" evidence="1">
    <location>
        <begin position="255"/>
        <end position="338"/>
    </location>
</feature>
<feature type="binding site" evidence="1">
    <location>
        <position position="20"/>
    </location>
    <ligand>
        <name>ATP</name>
        <dbReference type="ChEBI" id="CHEBI:30616"/>
    </ligand>
</feature>
<feature type="binding site" evidence="1">
    <location>
        <position position="21"/>
    </location>
    <ligand>
        <name>ATP</name>
        <dbReference type="ChEBI" id="CHEBI:30616"/>
    </ligand>
</feature>
<feature type="binding site" evidence="1">
    <location>
        <position position="62"/>
    </location>
    <ligand>
        <name>ATP</name>
        <dbReference type="ChEBI" id="CHEBI:30616"/>
    </ligand>
</feature>
<feature type="binding site" evidence="1">
    <location>
        <position position="65"/>
    </location>
    <ligand>
        <name>ATP</name>
        <dbReference type="ChEBI" id="CHEBI:30616"/>
    </ligand>
</feature>
<feature type="binding site" evidence="1">
    <location>
        <position position="66"/>
    </location>
    <ligand>
        <name>ATP</name>
        <dbReference type="ChEBI" id="CHEBI:30616"/>
    </ligand>
</feature>
<feature type="binding site" evidence="1">
    <location>
        <position position="66"/>
    </location>
    <ligand>
        <name>Mg(2+)</name>
        <dbReference type="ChEBI" id="CHEBI:18420"/>
    </ligand>
</feature>
<feature type="binding site" evidence="1">
    <location>
        <position position="67"/>
    </location>
    <ligand>
        <name>ATP</name>
        <dbReference type="ChEBI" id="CHEBI:30616"/>
    </ligand>
</feature>
<feature type="binding site" evidence="1">
    <location>
        <begin position="128"/>
        <end position="130"/>
    </location>
    <ligand>
        <name>ATP</name>
        <dbReference type="ChEBI" id="CHEBI:30616"/>
    </ligand>
</feature>
<feature type="binding site" evidence="1">
    <location>
        <position position="171"/>
    </location>
    <ligand>
        <name>ATP</name>
        <dbReference type="ChEBI" id="CHEBI:30616"/>
    </ligand>
</feature>
<feature type="binding site" evidence="1">
    <location>
        <position position="181"/>
    </location>
    <ligand>
        <name>ATP</name>
        <dbReference type="ChEBI" id="CHEBI:30616"/>
    </ligand>
</feature>
<feature type="binding site" evidence="1">
    <location>
        <position position="218"/>
    </location>
    <ligand>
        <name>ATP</name>
        <dbReference type="ChEBI" id="CHEBI:30616"/>
    </ligand>
</feature>
<feature type="binding site" evidence="1">
    <location>
        <position position="310"/>
    </location>
    <ligand>
        <name>DNA</name>
        <dbReference type="ChEBI" id="CHEBI:16991"/>
    </ligand>
</feature>
<feature type="binding site" evidence="1">
    <location>
        <position position="315"/>
    </location>
    <ligand>
        <name>DNA</name>
        <dbReference type="ChEBI" id="CHEBI:16991"/>
    </ligand>
</feature>
<dbReference type="EC" id="3.6.4.-" evidence="1"/>
<dbReference type="EMBL" id="AE008691">
    <property type="protein sequence ID" value="AAM24411.1"/>
    <property type="molecule type" value="Genomic_DNA"/>
</dbReference>
<dbReference type="RefSeq" id="WP_009609552.1">
    <property type="nucleotide sequence ID" value="NZ_JANUCV010000001.1"/>
</dbReference>
<dbReference type="SMR" id="Q8RAN2"/>
<dbReference type="STRING" id="273068.TTE1180"/>
<dbReference type="KEGG" id="tte:TTE1180"/>
<dbReference type="eggNOG" id="COG2255">
    <property type="taxonomic scope" value="Bacteria"/>
</dbReference>
<dbReference type="HOGENOM" id="CLU_055599_1_0_9"/>
<dbReference type="OrthoDB" id="9804478at2"/>
<dbReference type="Proteomes" id="UP000000555">
    <property type="component" value="Chromosome"/>
</dbReference>
<dbReference type="GO" id="GO:0005737">
    <property type="term" value="C:cytoplasm"/>
    <property type="evidence" value="ECO:0007669"/>
    <property type="project" value="UniProtKB-SubCell"/>
</dbReference>
<dbReference type="GO" id="GO:0048476">
    <property type="term" value="C:Holliday junction resolvase complex"/>
    <property type="evidence" value="ECO:0007669"/>
    <property type="project" value="UniProtKB-UniRule"/>
</dbReference>
<dbReference type="GO" id="GO:0005524">
    <property type="term" value="F:ATP binding"/>
    <property type="evidence" value="ECO:0007669"/>
    <property type="project" value="UniProtKB-UniRule"/>
</dbReference>
<dbReference type="GO" id="GO:0016887">
    <property type="term" value="F:ATP hydrolysis activity"/>
    <property type="evidence" value="ECO:0007669"/>
    <property type="project" value="InterPro"/>
</dbReference>
<dbReference type="GO" id="GO:0000400">
    <property type="term" value="F:four-way junction DNA binding"/>
    <property type="evidence" value="ECO:0007669"/>
    <property type="project" value="UniProtKB-UniRule"/>
</dbReference>
<dbReference type="GO" id="GO:0009378">
    <property type="term" value="F:four-way junction helicase activity"/>
    <property type="evidence" value="ECO:0007669"/>
    <property type="project" value="InterPro"/>
</dbReference>
<dbReference type="GO" id="GO:0006310">
    <property type="term" value="P:DNA recombination"/>
    <property type="evidence" value="ECO:0007669"/>
    <property type="project" value="UniProtKB-UniRule"/>
</dbReference>
<dbReference type="GO" id="GO:0006281">
    <property type="term" value="P:DNA repair"/>
    <property type="evidence" value="ECO:0007669"/>
    <property type="project" value="UniProtKB-UniRule"/>
</dbReference>
<dbReference type="CDD" id="cd00009">
    <property type="entry name" value="AAA"/>
    <property type="match status" value="1"/>
</dbReference>
<dbReference type="FunFam" id="1.10.8.60:FF:000023">
    <property type="entry name" value="Holliday junction ATP-dependent DNA helicase RuvB"/>
    <property type="match status" value="1"/>
</dbReference>
<dbReference type="Gene3D" id="1.10.8.60">
    <property type="match status" value="1"/>
</dbReference>
<dbReference type="Gene3D" id="3.40.50.300">
    <property type="entry name" value="P-loop containing nucleotide triphosphate hydrolases"/>
    <property type="match status" value="1"/>
</dbReference>
<dbReference type="Gene3D" id="1.10.10.10">
    <property type="entry name" value="Winged helix-like DNA-binding domain superfamily/Winged helix DNA-binding domain"/>
    <property type="match status" value="1"/>
</dbReference>
<dbReference type="HAMAP" id="MF_00016">
    <property type="entry name" value="DNA_HJ_migration_RuvB"/>
    <property type="match status" value="1"/>
</dbReference>
<dbReference type="InterPro" id="IPR003593">
    <property type="entry name" value="AAA+_ATPase"/>
</dbReference>
<dbReference type="InterPro" id="IPR041445">
    <property type="entry name" value="AAA_lid_4"/>
</dbReference>
<dbReference type="InterPro" id="IPR004605">
    <property type="entry name" value="DNA_helicase_Holl-junc_RuvB"/>
</dbReference>
<dbReference type="InterPro" id="IPR027417">
    <property type="entry name" value="P-loop_NTPase"/>
</dbReference>
<dbReference type="InterPro" id="IPR008824">
    <property type="entry name" value="RuvB-like_N"/>
</dbReference>
<dbReference type="InterPro" id="IPR008823">
    <property type="entry name" value="RuvB_C"/>
</dbReference>
<dbReference type="InterPro" id="IPR036388">
    <property type="entry name" value="WH-like_DNA-bd_sf"/>
</dbReference>
<dbReference type="InterPro" id="IPR036390">
    <property type="entry name" value="WH_DNA-bd_sf"/>
</dbReference>
<dbReference type="NCBIfam" id="NF000868">
    <property type="entry name" value="PRK00080.1"/>
    <property type="match status" value="1"/>
</dbReference>
<dbReference type="NCBIfam" id="TIGR00635">
    <property type="entry name" value="ruvB"/>
    <property type="match status" value="1"/>
</dbReference>
<dbReference type="PANTHER" id="PTHR42848">
    <property type="match status" value="1"/>
</dbReference>
<dbReference type="PANTHER" id="PTHR42848:SF1">
    <property type="entry name" value="HOLLIDAY JUNCTION BRANCH MIGRATION COMPLEX SUBUNIT RUVB"/>
    <property type="match status" value="1"/>
</dbReference>
<dbReference type="Pfam" id="PF17864">
    <property type="entry name" value="AAA_lid_4"/>
    <property type="match status" value="1"/>
</dbReference>
<dbReference type="Pfam" id="PF05491">
    <property type="entry name" value="RuvB_C"/>
    <property type="match status" value="1"/>
</dbReference>
<dbReference type="Pfam" id="PF05496">
    <property type="entry name" value="RuvB_N"/>
    <property type="match status" value="1"/>
</dbReference>
<dbReference type="SMART" id="SM00382">
    <property type="entry name" value="AAA"/>
    <property type="match status" value="1"/>
</dbReference>
<dbReference type="SUPFAM" id="SSF52540">
    <property type="entry name" value="P-loop containing nucleoside triphosphate hydrolases"/>
    <property type="match status" value="1"/>
</dbReference>
<dbReference type="SUPFAM" id="SSF46785">
    <property type="entry name" value="Winged helix' DNA-binding domain"/>
    <property type="match status" value="1"/>
</dbReference>